<evidence type="ECO:0000250" key="1"/>
<evidence type="ECO:0000255" key="2"/>
<evidence type="ECO:0000305" key="3"/>
<reference key="1">
    <citation type="journal article" date="2004" name="Proc. Natl. Acad. Sci. U.S.A.">
        <title>Complete genomes of two clinical Staphylococcus aureus strains: evidence for the rapid evolution of virulence and drug resistance.</title>
        <authorList>
            <person name="Holden M.T.G."/>
            <person name="Feil E.J."/>
            <person name="Lindsay J.A."/>
            <person name="Peacock S.J."/>
            <person name="Day N.P.J."/>
            <person name="Enright M.C."/>
            <person name="Foster T.J."/>
            <person name="Moore C.E."/>
            <person name="Hurst L."/>
            <person name="Atkin R."/>
            <person name="Barron A."/>
            <person name="Bason N."/>
            <person name="Bentley S.D."/>
            <person name="Chillingworth C."/>
            <person name="Chillingworth T."/>
            <person name="Churcher C."/>
            <person name="Clark L."/>
            <person name="Corton C."/>
            <person name="Cronin A."/>
            <person name="Doggett J."/>
            <person name="Dowd L."/>
            <person name="Feltwell T."/>
            <person name="Hance Z."/>
            <person name="Harris B."/>
            <person name="Hauser H."/>
            <person name="Holroyd S."/>
            <person name="Jagels K."/>
            <person name="James K.D."/>
            <person name="Lennard N."/>
            <person name="Line A."/>
            <person name="Mayes R."/>
            <person name="Moule S."/>
            <person name="Mungall K."/>
            <person name="Ormond D."/>
            <person name="Quail M.A."/>
            <person name="Rabbinowitsch E."/>
            <person name="Rutherford K.M."/>
            <person name="Sanders M."/>
            <person name="Sharp S."/>
            <person name="Simmonds M."/>
            <person name="Stevens K."/>
            <person name="Whitehead S."/>
            <person name="Barrell B.G."/>
            <person name="Spratt B.G."/>
            <person name="Parkhill J."/>
        </authorList>
    </citation>
    <scope>NUCLEOTIDE SEQUENCE [LARGE SCALE GENOMIC DNA]</scope>
    <source>
        <strain>MRSA252</strain>
    </source>
</reference>
<protein>
    <recommendedName>
        <fullName>UPF0754 membrane protein SAR1937</fullName>
    </recommendedName>
</protein>
<gene>
    <name type="ordered locus">SAR1937</name>
</gene>
<accession>Q6GFL0</accession>
<comment type="subcellular location">
    <subcellularLocation>
        <location evidence="1">Cell membrane</location>
        <topology evidence="1">Multi-pass membrane protein</topology>
    </subcellularLocation>
</comment>
<comment type="similarity">
    <text evidence="3">Belongs to the UPF0754 family.</text>
</comment>
<sequence length="374" mass="42676">MNALFIIIFMIVVGAIIGGVTNVIAIRMLFHPFKPYYIFKFRVPFTPGLIPKRREEIATKIGQVIEEHLLTETLINEKLKSEQSQQAIESMIQQQLQKLTKDQLSIKQITSQIDIDLEQVLQTNGNQYIASQLNNYYTKHQNQTIASLLPNQLVTFLDQHVDNATDLLCDRARNYLSSAKGTQDINDMLDTFFNEKGKLIGMLQMFMTKESIADRIQQELIRLTSHPKARAIVTSLITNEYQTFKDKSLNKLLDTSQFNEIAENLSMYVTTYASKQANKPVVTLMPQFVDYLESQLSSKLANLIIEQLSIHLSTIMKKVDLRGLIEEQINTFDLDYIEKLIIEIANKELKLIMSLGFILGGIIGFFQGLVAIFV</sequence>
<organism>
    <name type="scientific">Staphylococcus aureus (strain MRSA252)</name>
    <dbReference type="NCBI Taxonomy" id="282458"/>
    <lineage>
        <taxon>Bacteria</taxon>
        <taxon>Bacillati</taxon>
        <taxon>Bacillota</taxon>
        <taxon>Bacilli</taxon>
        <taxon>Bacillales</taxon>
        <taxon>Staphylococcaceae</taxon>
        <taxon>Staphylococcus</taxon>
    </lineage>
</organism>
<feature type="chain" id="PRO_0000388308" description="UPF0754 membrane protein SAR1937">
    <location>
        <begin position="1"/>
        <end position="374"/>
    </location>
</feature>
<feature type="transmembrane region" description="Helical" evidence="2">
    <location>
        <begin position="4"/>
        <end position="24"/>
    </location>
</feature>
<feature type="transmembrane region" description="Helical" evidence="2">
    <location>
        <begin position="354"/>
        <end position="374"/>
    </location>
</feature>
<proteinExistence type="inferred from homology"/>
<name>Y1937_STAAR</name>
<dbReference type="EMBL" id="BX571856">
    <property type="protein sequence ID" value="CAG40924.1"/>
    <property type="molecule type" value="Genomic_DNA"/>
</dbReference>
<dbReference type="RefSeq" id="WP_000992536.1">
    <property type="nucleotide sequence ID" value="NC_002952.2"/>
</dbReference>
<dbReference type="KEGG" id="sar:SAR1937"/>
<dbReference type="HOGENOM" id="CLU_042384_0_0_9"/>
<dbReference type="Proteomes" id="UP000000596">
    <property type="component" value="Chromosome"/>
</dbReference>
<dbReference type="GO" id="GO:0005886">
    <property type="term" value="C:plasma membrane"/>
    <property type="evidence" value="ECO:0007669"/>
    <property type="project" value="UniProtKB-SubCell"/>
</dbReference>
<dbReference type="InterPro" id="IPR007383">
    <property type="entry name" value="DUF445"/>
</dbReference>
<dbReference type="InterPro" id="IPR016991">
    <property type="entry name" value="UCP032178"/>
</dbReference>
<dbReference type="PANTHER" id="PTHR35791">
    <property type="entry name" value="UPF0754 MEMBRANE PROTEIN YHEB"/>
    <property type="match status" value="1"/>
</dbReference>
<dbReference type="PANTHER" id="PTHR35791:SF1">
    <property type="entry name" value="UPF0754 MEMBRANE PROTEIN YHEB"/>
    <property type="match status" value="1"/>
</dbReference>
<dbReference type="Pfam" id="PF04286">
    <property type="entry name" value="DUF445"/>
    <property type="match status" value="1"/>
</dbReference>
<dbReference type="PIRSF" id="PIRSF032178">
    <property type="entry name" value="UCP032178"/>
    <property type="match status" value="1"/>
</dbReference>
<keyword id="KW-1003">Cell membrane</keyword>
<keyword id="KW-0472">Membrane</keyword>
<keyword id="KW-0812">Transmembrane</keyword>
<keyword id="KW-1133">Transmembrane helix</keyword>